<feature type="chain" id="PRO_1000196817" description="Formate--tetrahydrofolate ligase">
    <location>
        <begin position="1"/>
        <end position="558"/>
    </location>
</feature>
<feature type="binding site" evidence="1">
    <location>
        <begin position="65"/>
        <end position="72"/>
    </location>
    <ligand>
        <name>ATP</name>
        <dbReference type="ChEBI" id="CHEBI:30616"/>
    </ligand>
</feature>
<comment type="catalytic activity">
    <reaction evidence="1">
        <text>(6S)-5,6,7,8-tetrahydrofolate + formate + ATP = (6R)-10-formyltetrahydrofolate + ADP + phosphate</text>
        <dbReference type="Rhea" id="RHEA:20221"/>
        <dbReference type="ChEBI" id="CHEBI:15740"/>
        <dbReference type="ChEBI" id="CHEBI:30616"/>
        <dbReference type="ChEBI" id="CHEBI:43474"/>
        <dbReference type="ChEBI" id="CHEBI:57453"/>
        <dbReference type="ChEBI" id="CHEBI:195366"/>
        <dbReference type="ChEBI" id="CHEBI:456216"/>
        <dbReference type="EC" id="6.3.4.3"/>
    </reaction>
</comment>
<comment type="pathway">
    <text evidence="1">One-carbon metabolism; tetrahydrofolate interconversion.</text>
</comment>
<comment type="similarity">
    <text evidence="1">Belongs to the formate--tetrahydrofolate ligase family.</text>
</comment>
<gene>
    <name evidence="1" type="primary">fhs</name>
    <name type="ordered locus">M446_3236</name>
</gene>
<dbReference type="EC" id="6.3.4.3" evidence="1"/>
<dbReference type="EMBL" id="CP000943">
    <property type="protein sequence ID" value="ACA17641.1"/>
    <property type="molecule type" value="Genomic_DNA"/>
</dbReference>
<dbReference type="RefSeq" id="WP_012333041.1">
    <property type="nucleotide sequence ID" value="NC_010511.1"/>
</dbReference>
<dbReference type="SMR" id="B0UQF5"/>
<dbReference type="STRING" id="426117.M446_3236"/>
<dbReference type="KEGG" id="met:M446_3236"/>
<dbReference type="eggNOG" id="COG2759">
    <property type="taxonomic scope" value="Bacteria"/>
</dbReference>
<dbReference type="HOGENOM" id="CLU_003601_3_3_5"/>
<dbReference type="UniPathway" id="UPA00193"/>
<dbReference type="GO" id="GO:0005524">
    <property type="term" value="F:ATP binding"/>
    <property type="evidence" value="ECO:0007669"/>
    <property type="project" value="UniProtKB-UniRule"/>
</dbReference>
<dbReference type="GO" id="GO:0004329">
    <property type="term" value="F:formate-tetrahydrofolate ligase activity"/>
    <property type="evidence" value="ECO:0007669"/>
    <property type="project" value="UniProtKB-UniRule"/>
</dbReference>
<dbReference type="GO" id="GO:0035999">
    <property type="term" value="P:tetrahydrofolate interconversion"/>
    <property type="evidence" value="ECO:0007669"/>
    <property type="project" value="UniProtKB-UniRule"/>
</dbReference>
<dbReference type="CDD" id="cd00477">
    <property type="entry name" value="FTHFS"/>
    <property type="match status" value="1"/>
</dbReference>
<dbReference type="FunFam" id="3.30.1510.10:FF:000001">
    <property type="entry name" value="Formate--tetrahydrofolate ligase"/>
    <property type="match status" value="1"/>
</dbReference>
<dbReference type="FunFam" id="3.10.410.10:FF:000001">
    <property type="entry name" value="Putative formate--tetrahydrofolate ligase"/>
    <property type="match status" value="1"/>
</dbReference>
<dbReference type="Gene3D" id="3.30.1510.10">
    <property type="entry name" value="Domain 2, N(10)-formyltetrahydrofolate synthetase"/>
    <property type="match status" value="1"/>
</dbReference>
<dbReference type="Gene3D" id="3.10.410.10">
    <property type="entry name" value="Formyltetrahydrofolate synthetase, domain 3"/>
    <property type="match status" value="1"/>
</dbReference>
<dbReference type="Gene3D" id="3.40.50.300">
    <property type="entry name" value="P-loop containing nucleotide triphosphate hydrolases"/>
    <property type="match status" value="1"/>
</dbReference>
<dbReference type="HAMAP" id="MF_01543">
    <property type="entry name" value="FTHFS"/>
    <property type="match status" value="1"/>
</dbReference>
<dbReference type="InterPro" id="IPR000559">
    <property type="entry name" value="Formate_THF_ligase"/>
</dbReference>
<dbReference type="InterPro" id="IPR020628">
    <property type="entry name" value="Formate_THF_ligase_CS"/>
</dbReference>
<dbReference type="InterPro" id="IPR027417">
    <property type="entry name" value="P-loop_NTPase"/>
</dbReference>
<dbReference type="NCBIfam" id="NF010030">
    <property type="entry name" value="PRK13505.1"/>
    <property type="match status" value="1"/>
</dbReference>
<dbReference type="Pfam" id="PF01268">
    <property type="entry name" value="FTHFS"/>
    <property type="match status" value="1"/>
</dbReference>
<dbReference type="SUPFAM" id="SSF52540">
    <property type="entry name" value="P-loop containing nucleoside triphosphate hydrolases"/>
    <property type="match status" value="1"/>
</dbReference>
<dbReference type="PROSITE" id="PS00721">
    <property type="entry name" value="FTHFS_1"/>
    <property type="match status" value="1"/>
</dbReference>
<dbReference type="PROSITE" id="PS00722">
    <property type="entry name" value="FTHFS_2"/>
    <property type="match status" value="1"/>
</dbReference>
<keyword id="KW-0067">ATP-binding</keyword>
<keyword id="KW-0436">Ligase</keyword>
<keyword id="KW-0547">Nucleotide-binding</keyword>
<keyword id="KW-0554">One-carbon metabolism</keyword>
<evidence type="ECO:0000255" key="1">
    <source>
        <dbReference type="HAMAP-Rule" id="MF_01543"/>
    </source>
</evidence>
<accession>B0UQF5</accession>
<proteinExistence type="inferred from homology"/>
<name>FTHS_METS4</name>
<reference key="1">
    <citation type="submission" date="2008-02" db="EMBL/GenBank/DDBJ databases">
        <title>Complete sequence of chromosome of Methylobacterium sp. 4-46.</title>
        <authorList>
            <consortium name="US DOE Joint Genome Institute"/>
            <person name="Copeland A."/>
            <person name="Lucas S."/>
            <person name="Lapidus A."/>
            <person name="Glavina del Rio T."/>
            <person name="Dalin E."/>
            <person name="Tice H."/>
            <person name="Bruce D."/>
            <person name="Goodwin L."/>
            <person name="Pitluck S."/>
            <person name="Chertkov O."/>
            <person name="Brettin T."/>
            <person name="Detter J.C."/>
            <person name="Han C."/>
            <person name="Kuske C.R."/>
            <person name="Schmutz J."/>
            <person name="Larimer F."/>
            <person name="Land M."/>
            <person name="Hauser L."/>
            <person name="Kyrpides N."/>
            <person name="Ivanova N."/>
            <person name="Marx C.J."/>
            <person name="Richardson P."/>
        </authorList>
    </citation>
    <scope>NUCLEOTIDE SEQUENCE [LARGE SCALE GENOMIC DNA]</scope>
    <source>
        <strain>4-46</strain>
    </source>
</reference>
<organism>
    <name type="scientific">Methylobacterium sp. (strain 4-46)</name>
    <dbReference type="NCBI Taxonomy" id="426117"/>
    <lineage>
        <taxon>Bacteria</taxon>
        <taxon>Pseudomonadati</taxon>
        <taxon>Pseudomonadota</taxon>
        <taxon>Alphaproteobacteria</taxon>
        <taxon>Hyphomicrobiales</taxon>
        <taxon>Methylobacteriaceae</taxon>
        <taxon>Methylobacterium</taxon>
    </lineage>
</organism>
<sequence length="558" mass="58766">MPTDIEIARAATLQPISAIAETLGIPDEALHPYGRHIAKIDHAHIASLEAKPEGKLVLVTAISPTPAGEGKTTTTVGLGDALNRIGKRTVICLREPSLGPCFGMKGGAAGGGRSQVVPMEAINLHFTGDFHAITSAHSLAAALIDNHIYWGNALGIDPRRVAWRRVVDMNDRSLRSIVQSLGGVANGYPREDGFDITVASEVMAVFCLARDLADLEARLGRIVVAESRERKPVTLADLKATGAMTVLLKDALQPNLVQTLEGSPALIHGGPFANIAHGCNSVIATRSGLRLGEYAVTEAGFGADLGAEKFIDIKCRQTGLSPSAVVIVATVRALKMHGGVEKKALGGENVAALEKGFANLQRHVENVRRFGLPVVVAVNHFHADTEAEHAALKALCRDRLDVQAITCRHWAEGGAGAEDLARAVVSLAEGGAPATPNFVYPEEAKLTDKIRTIAQTLYGAADIQVESKAAAKLAQFEKDGYGRLPVCMAKTQYSFSTDPGLIGAPSGHVVAVRDVRLSAGAGFVVVICGEIMTMPGLPKVPASEGIYLDANGQIEGLF</sequence>
<protein>
    <recommendedName>
        <fullName evidence="1">Formate--tetrahydrofolate ligase</fullName>
        <ecNumber evidence="1">6.3.4.3</ecNumber>
    </recommendedName>
    <alternativeName>
        <fullName evidence="1">Formyltetrahydrofolate synthetase</fullName>
        <shortName evidence="1">FHS</shortName>
        <shortName evidence="1">FTHFS</shortName>
    </alternativeName>
</protein>